<feature type="chain" id="PRO_0000410901" description="AT-rich interactive domain-containing protein 5B">
    <location>
        <begin position="1"/>
        <end position="1044"/>
    </location>
</feature>
<feature type="domain" description="ARID" evidence="2">
    <location>
        <begin position="212"/>
        <end position="304"/>
    </location>
</feature>
<feature type="region of interest" description="Disordered" evidence="3">
    <location>
        <begin position="143"/>
        <end position="211"/>
    </location>
</feature>
<feature type="region of interest" description="Disordered" evidence="3">
    <location>
        <begin position="301"/>
        <end position="350"/>
    </location>
</feature>
<feature type="region of interest" description="Disordered" evidence="3">
    <location>
        <begin position="363"/>
        <end position="392"/>
    </location>
</feature>
<feature type="region of interest" description="Disordered" evidence="3">
    <location>
        <begin position="554"/>
        <end position="591"/>
    </location>
</feature>
<feature type="region of interest" description="Disordered" evidence="3">
    <location>
        <begin position="603"/>
        <end position="672"/>
    </location>
</feature>
<feature type="region of interest" description="Disordered" evidence="3">
    <location>
        <begin position="733"/>
        <end position="767"/>
    </location>
</feature>
<feature type="region of interest" description="Disordered" evidence="3">
    <location>
        <begin position="811"/>
        <end position="835"/>
    </location>
</feature>
<feature type="region of interest" description="Disordered" evidence="3">
    <location>
        <begin position="884"/>
        <end position="912"/>
    </location>
</feature>
<feature type="compositionally biased region" description="Basic and acidic residues" evidence="3">
    <location>
        <begin position="197"/>
        <end position="211"/>
    </location>
</feature>
<feature type="compositionally biased region" description="Basic and acidic residues" evidence="3">
    <location>
        <begin position="301"/>
        <end position="310"/>
    </location>
</feature>
<feature type="compositionally biased region" description="Basic and acidic residues" evidence="3">
    <location>
        <begin position="337"/>
        <end position="350"/>
    </location>
</feature>
<feature type="compositionally biased region" description="Polar residues" evidence="3">
    <location>
        <begin position="369"/>
        <end position="380"/>
    </location>
</feature>
<feature type="compositionally biased region" description="Low complexity" evidence="3">
    <location>
        <begin position="565"/>
        <end position="591"/>
    </location>
</feature>
<feature type="compositionally biased region" description="Basic and acidic residues" evidence="3">
    <location>
        <begin position="611"/>
        <end position="635"/>
    </location>
</feature>
<feature type="compositionally biased region" description="Basic and acidic residues" evidence="3">
    <location>
        <begin position="644"/>
        <end position="660"/>
    </location>
</feature>
<feature type="compositionally biased region" description="Basic and acidic residues" evidence="3">
    <location>
        <begin position="733"/>
        <end position="746"/>
    </location>
</feature>
<feature type="compositionally biased region" description="Low complexity" evidence="3">
    <location>
        <begin position="752"/>
        <end position="767"/>
    </location>
</feature>
<feature type="compositionally biased region" description="Basic and acidic residues" evidence="3">
    <location>
        <begin position="816"/>
        <end position="826"/>
    </location>
</feature>
<feature type="compositionally biased region" description="Basic and acidic residues" evidence="3">
    <location>
        <begin position="894"/>
        <end position="909"/>
    </location>
</feature>
<gene>
    <name type="primary">arid5b</name>
</gene>
<keyword id="KW-0010">Activator</keyword>
<keyword id="KW-0238">DNA-binding</keyword>
<keyword id="KW-0539">Nucleus</keyword>
<keyword id="KW-1185">Reference proteome</keyword>
<keyword id="KW-0804">Transcription</keyword>
<keyword id="KW-0805">Transcription regulation</keyword>
<dbReference type="EMBL" id="CABZ01071109">
    <property type="status" value="NOT_ANNOTATED_CDS"/>
    <property type="molecule type" value="Genomic_DNA"/>
</dbReference>
<dbReference type="EMBL" id="CABZ01071110">
    <property type="status" value="NOT_ANNOTATED_CDS"/>
    <property type="molecule type" value="Genomic_DNA"/>
</dbReference>
<dbReference type="EMBL" id="CABZ01071111">
    <property type="status" value="NOT_ANNOTATED_CDS"/>
    <property type="molecule type" value="Genomic_DNA"/>
</dbReference>
<dbReference type="EMBL" id="CABZ01071112">
    <property type="status" value="NOT_ANNOTATED_CDS"/>
    <property type="molecule type" value="Genomic_DNA"/>
</dbReference>
<dbReference type="EMBL" id="CABZ01071113">
    <property type="status" value="NOT_ANNOTATED_CDS"/>
    <property type="molecule type" value="Genomic_DNA"/>
</dbReference>
<dbReference type="EMBL" id="CABZ01071114">
    <property type="status" value="NOT_ANNOTATED_CDS"/>
    <property type="molecule type" value="Genomic_DNA"/>
</dbReference>
<dbReference type="EMBL" id="CABZ01071115">
    <property type="status" value="NOT_ANNOTATED_CDS"/>
    <property type="molecule type" value="Genomic_DNA"/>
</dbReference>
<dbReference type="EMBL" id="CABZ01071116">
    <property type="status" value="NOT_ANNOTATED_CDS"/>
    <property type="molecule type" value="Genomic_DNA"/>
</dbReference>
<dbReference type="EMBL" id="CABZ01071117">
    <property type="status" value="NOT_ANNOTATED_CDS"/>
    <property type="molecule type" value="Genomic_DNA"/>
</dbReference>
<dbReference type="EMBL" id="CABZ01071118">
    <property type="status" value="NOT_ANNOTATED_CDS"/>
    <property type="molecule type" value="Genomic_DNA"/>
</dbReference>
<dbReference type="EMBL" id="CABZ01071119">
    <property type="status" value="NOT_ANNOTATED_CDS"/>
    <property type="molecule type" value="Genomic_DNA"/>
</dbReference>
<dbReference type="EMBL" id="CABZ01071120">
    <property type="status" value="NOT_ANNOTATED_CDS"/>
    <property type="molecule type" value="Genomic_DNA"/>
</dbReference>
<dbReference type="EMBL" id="CABZ01071121">
    <property type="status" value="NOT_ANNOTATED_CDS"/>
    <property type="molecule type" value="Genomic_DNA"/>
</dbReference>
<dbReference type="EMBL" id="CABZ01071122">
    <property type="status" value="NOT_ANNOTATED_CDS"/>
    <property type="molecule type" value="Genomic_DNA"/>
</dbReference>
<dbReference type="EMBL" id="CABZ01071123">
    <property type="status" value="NOT_ANNOTATED_CDS"/>
    <property type="molecule type" value="Genomic_DNA"/>
</dbReference>
<dbReference type="EMBL" id="CABZ01071124">
    <property type="status" value="NOT_ANNOTATED_CDS"/>
    <property type="molecule type" value="Genomic_DNA"/>
</dbReference>
<dbReference type="EMBL" id="CABZ01071125">
    <property type="status" value="NOT_ANNOTATED_CDS"/>
    <property type="molecule type" value="Genomic_DNA"/>
</dbReference>
<dbReference type="EMBL" id="CABZ01071126">
    <property type="status" value="NOT_ANNOTATED_CDS"/>
    <property type="molecule type" value="Genomic_DNA"/>
</dbReference>
<dbReference type="EMBL" id="CABZ01071127">
    <property type="status" value="NOT_ANNOTATED_CDS"/>
    <property type="molecule type" value="Genomic_DNA"/>
</dbReference>
<dbReference type="EMBL" id="CABZ01071128">
    <property type="status" value="NOT_ANNOTATED_CDS"/>
    <property type="molecule type" value="Genomic_DNA"/>
</dbReference>
<dbReference type="EMBL" id="CABZ01071129">
    <property type="status" value="NOT_ANNOTATED_CDS"/>
    <property type="molecule type" value="Genomic_DNA"/>
</dbReference>
<dbReference type="EMBL" id="CABZ01071130">
    <property type="status" value="NOT_ANNOTATED_CDS"/>
    <property type="molecule type" value="Genomic_DNA"/>
</dbReference>
<dbReference type="EMBL" id="CABZ01071131">
    <property type="status" value="NOT_ANNOTATED_CDS"/>
    <property type="molecule type" value="Genomic_DNA"/>
</dbReference>
<dbReference type="EMBL" id="CABZ01071132">
    <property type="status" value="NOT_ANNOTATED_CDS"/>
    <property type="molecule type" value="Genomic_DNA"/>
</dbReference>
<dbReference type="EMBL" id="CABZ01071133">
    <property type="status" value="NOT_ANNOTATED_CDS"/>
    <property type="molecule type" value="Genomic_DNA"/>
</dbReference>
<dbReference type="EMBL" id="CABZ01071134">
    <property type="status" value="NOT_ANNOTATED_CDS"/>
    <property type="molecule type" value="Genomic_DNA"/>
</dbReference>
<dbReference type="EMBL" id="CABZ01071135">
    <property type="status" value="NOT_ANNOTATED_CDS"/>
    <property type="molecule type" value="Genomic_DNA"/>
</dbReference>
<dbReference type="EMBL" id="CR354434">
    <property type="status" value="NOT_ANNOTATED_CDS"/>
    <property type="molecule type" value="Genomic_DNA"/>
</dbReference>
<dbReference type="RefSeq" id="XP_017214107.2">
    <property type="nucleotide sequence ID" value="XM_017358618.2"/>
</dbReference>
<dbReference type="SMR" id="E7F888"/>
<dbReference type="FunCoup" id="E7F888">
    <property type="interactions" value="1156"/>
</dbReference>
<dbReference type="STRING" id="7955.ENSDARP00000054091"/>
<dbReference type="PaxDb" id="7955-ENSDARP00000054091"/>
<dbReference type="GeneID" id="100536827"/>
<dbReference type="AGR" id="ZFIN:ZDB-GENE-121214-272"/>
<dbReference type="ZFIN" id="ZDB-GENE-121214-272">
    <property type="gene designation" value="arid5b"/>
</dbReference>
<dbReference type="eggNOG" id="KOG2744">
    <property type="taxonomic scope" value="Eukaryota"/>
</dbReference>
<dbReference type="HOGENOM" id="CLU_007985_0_0_1"/>
<dbReference type="InParanoid" id="E7F888"/>
<dbReference type="PhylomeDB" id="E7F888"/>
<dbReference type="TreeFam" id="TF324725"/>
<dbReference type="PRO" id="PR:E7F888"/>
<dbReference type="Proteomes" id="UP000000437">
    <property type="component" value="Chromosome 12"/>
</dbReference>
<dbReference type="GO" id="GO:0005634">
    <property type="term" value="C:nucleus"/>
    <property type="evidence" value="ECO:0000318"/>
    <property type="project" value="GO_Central"/>
</dbReference>
<dbReference type="GO" id="GO:0000976">
    <property type="term" value="F:transcription cis-regulatory region binding"/>
    <property type="evidence" value="ECO:0000250"/>
    <property type="project" value="UniProtKB"/>
</dbReference>
<dbReference type="GO" id="GO:0003713">
    <property type="term" value="F:transcription coactivator activity"/>
    <property type="evidence" value="ECO:0000250"/>
    <property type="project" value="UniProtKB"/>
</dbReference>
<dbReference type="GO" id="GO:0060612">
    <property type="term" value="P:adipose tissue development"/>
    <property type="evidence" value="ECO:0000250"/>
    <property type="project" value="UniProtKB"/>
</dbReference>
<dbReference type="GO" id="GO:0051091">
    <property type="term" value="P:positive regulation of DNA-binding transcription factor activity"/>
    <property type="evidence" value="ECO:0000250"/>
    <property type="project" value="UniProtKB"/>
</dbReference>
<dbReference type="GO" id="GO:0006357">
    <property type="term" value="P:regulation of transcription by RNA polymerase II"/>
    <property type="evidence" value="ECO:0000318"/>
    <property type="project" value="GO_Central"/>
</dbReference>
<dbReference type="CDD" id="cd16885">
    <property type="entry name" value="ARID_ARID5B"/>
    <property type="match status" value="1"/>
</dbReference>
<dbReference type="FunFam" id="1.10.150.60:FF:000004">
    <property type="entry name" value="AT-rich interactive domain-containing protein 5B"/>
    <property type="match status" value="1"/>
</dbReference>
<dbReference type="Gene3D" id="1.10.150.60">
    <property type="entry name" value="ARID DNA-binding domain"/>
    <property type="match status" value="1"/>
</dbReference>
<dbReference type="InterPro" id="IPR051232">
    <property type="entry name" value="ARID/SWI1_ChromRemod"/>
</dbReference>
<dbReference type="InterPro" id="IPR030408">
    <property type="entry name" value="ARID5B_ARID/BRIGHT_DNA-bd"/>
</dbReference>
<dbReference type="InterPro" id="IPR001606">
    <property type="entry name" value="ARID_dom"/>
</dbReference>
<dbReference type="InterPro" id="IPR036431">
    <property type="entry name" value="ARID_dom_sf"/>
</dbReference>
<dbReference type="PANTHER" id="PTHR13964:SF37">
    <property type="entry name" value="AT-RICH INTERACTIVE DOMAIN-CONTAINING PROTEIN 5B"/>
    <property type="match status" value="1"/>
</dbReference>
<dbReference type="PANTHER" id="PTHR13964">
    <property type="entry name" value="RBP-RELATED"/>
    <property type="match status" value="1"/>
</dbReference>
<dbReference type="Pfam" id="PF01388">
    <property type="entry name" value="ARID"/>
    <property type="match status" value="1"/>
</dbReference>
<dbReference type="SMART" id="SM01014">
    <property type="entry name" value="ARID"/>
    <property type="match status" value="1"/>
</dbReference>
<dbReference type="SMART" id="SM00501">
    <property type="entry name" value="BRIGHT"/>
    <property type="match status" value="1"/>
</dbReference>
<dbReference type="SUPFAM" id="SSF46774">
    <property type="entry name" value="ARID-like"/>
    <property type="match status" value="1"/>
</dbReference>
<dbReference type="PROSITE" id="PS51011">
    <property type="entry name" value="ARID"/>
    <property type="match status" value="1"/>
</dbReference>
<protein>
    <recommendedName>
        <fullName>AT-rich interactive domain-containing protein 5B</fullName>
        <shortName>ARID domain-containing protein 5B</shortName>
    </recommendedName>
</protein>
<evidence type="ECO:0000250" key="1"/>
<evidence type="ECO:0000255" key="2">
    <source>
        <dbReference type="PROSITE-ProRule" id="PRU00355"/>
    </source>
</evidence>
<evidence type="ECO:0000256" key="3">
    <source>
        <dbReference type="SAM" id="MobiDB-lite"/>
    </source>
</evidence>
<evidence type="ECO:0000305" key="4"/>
<comment type="function">
    <text evidence="1">Transcription coactivator that binds to the 5'-AATA[CT]-3' core sequence and plays a key role in adipogenesis and liver development. Required for adipogenesis: regulates triglyceride metabolism in adipocytes by regulating expression of adipogenic genes (By similarity).</text>
</comment>
<comment type="subcellular location">
    <subcellularLocation>
        <location evidence="2">Nucleus</location>
    </subcellularLocation>
</comment>
<comment type="domain">
    <text evidence="1">The ARID domain mediates the interaction with DNA.</text>
</comment>
<comment type="similarity">
    <text evidence="4">Belongs to the ARID5B family.</text>
</comment>
<proteinExistence type="inferred from homology"/>
<reference key="1">
    <citation type="journal article" date="2013" name="Nature">
        <title>The zebrafish reference genome sequence and its relationship to the human genome.</title>
        <authorList>
            <person name="Howe K."/>
            <person name="Clark M.D."/>
            <person name="Torroja C.F."/>
            <person name="Torrance J."/>
            <person name="Berthelot C."/>
            <person name="Muffato M."/>
            <person name="Collins J.E."/>
            <person name="Humphray S."/>
            <person name="McLaren K."/>
            <person name="Matthews L."/>
            <person name="McLaren S."/>
            <person name="Sealy I."/>
            <person name="Caccamo M."/>
            <person name="Churcher C."/>
            <person name="Scott C."/>
            <person name="Barrett J.C."/>
            <person name="Koch R."/>
            <person name="Rauch G.J."/>
            <person name="White S."/>
            <person name="Chow W."/>
            <person name="Kilian B."/>
            <person name="Quintais L.T."/>
            <person name="Guerra-Assuncao J.A."/>
            <person name="Zhou Y."/>
            <person name="Gu Y."/>
            <person name="Yen J."/>
            <person name="Vogel J.H."/>
            <person name="Eyre T."/>
            <person name="Redmond S."/>
            <person name="Banerjee R."/>
            <person name="Chi J."/>
            <person name="Fu B."/>
            <person name="Langley E."/>
            <person name="Maguire S.F."/>
            <person name="Laird G.K."/>
            <person name="Lloyd D."/>
            <person name="Kenyon E."/>
            <person name="Donaldson S."/>
            <person name="Sehra H."/>
            <person name="Almeida-King J."/>
            <person name="Loveland J."/>
            <person name="Trevanion S."/>
            <person name="Jones M."/>
            <person name="Quail M."/>
            <person name="Willey D."/>
            <person name="Hunt A."/>
            <person name="Burton J."/>
            <person name="Sims S."/>
            <person name="McLay K."/>
            <person name="Plumb B."/>
            <person name="Davis J."/>
            <person name="Clee C."/>
            <person name="Oliver K."/>
            <person name="Clark R."/>
            <person name="Riddle C."/>
            <person name="Elliot D."/>
            <person name="Threadgold G."/>
            <person name="Harden G."/>
            <person name="Ware D."/>
            <person name="Begum S."/>
            <person name="Mortimore B."/>
            <person name="Kerry G."/>
            <person name="Heath P."/>
            <person name="Phillimore B."/>
            <person name="Tracey A."/>
            <person name="Corby N."/>
            <person name="Dunn M."/>
            <person name="Johnson C."/>
            <person name="Wood J."/>
            <person name="Clark S."/>
            <person name="Pelan S."/>
            <person name="Griffiths G."/>
            <person name="Smith M."/>
            <person name="Glithero R."/>
            <person name="Howden P."/>
            <person name="Barker N."/>
            <person name="Lloyd C."/>
            <person name="Stevens C."/>
            <person name="Harley J."/>
            <person name="Holt K."/>
            <person name="Panagiotidis G."/>
            <person name="Lovell J."/>
            <person name="Beasley H."/>
            <person name="Henderson C."/>
            <person name="Gordon D."/>
            <person name="Auger K."/>
            <person name="Wright D."/>
            <person name="Collins J."/>
            <person name="Raisen C."/>
            <person name="Dyer L."/>
            <person name="Leung K."/>
            <person name="Robertson L."/>
            <person name="Ambridge K."/>
            <person name="Leongamornlert D."/>
            <person name="McGuire S."/>
            <person name="Gilderthorp R."/>
            <person name="Griffiths C."/>
            <person name="Manthravadi D."/>
            <person name="Nichol S."/>
            <person name="Barker G."/>
            <person name="Whitehead S."/>
            <person name="Kay M."/>
            <person name="Brown J."/>
            <person name="Murnane C."/>
            <person name="Gray E."/>
            <person name="Humphries M."/>
            <person name="Sycamore N."/>
            <person name="Barker D."/>
            <person name="Saunders D."/>
            <person name="Wallis J."/>
            <person name="Babbage A."/>
            <person name="Hammond S."/>
            <person name="Mashreghi-Mohammadi M."/>
            <person name="Barr L."/>
            <person name="Martin S."/>
            <person name="Wray P."/>
            <person name="Ellington A."/>
            <person name="Matthews N."/>
            <person name="Ellwood M."/>
            <person name="Woodmansey R."/>
            <person name="Clark G."/>
            <person name="Cooper J."/>
            <person name="Tromans A."/>
            <person name="Grafham D."/>
            <person name="Skuce C."/>
            <person name="Pandian R."/>
            <person name="Andrews R."/>
            <person name="Harrison E."/>
            <person name="Kimberley A."/>
            <person name="Garnett J."/>
            <person name="Fosker N."/>
            <person name="Hall R."/>
            <person name="Garner P."/>
            <person name="Kelly D."/>
            <person name="Bird C."/>
            <person name="Palmer S."/>
            <person name="Gehring I."/>
            <person name="Berger A."/>
            <person name="Dooley C.M."/>
            <person name="Ersan-Urun Z."/>
            <person name="Eser C."/>
            <person name="Geiger H."/>
            <person name="Geisler M."/>
            <person name="Karotki L."/>
            <person name="Kirn A."/>
            <person name="Konantz J."/>
            <person name="Konantz M."/>
            <person name="Oberlander M."/>
            <person name="Rudolph-Geiger S."/>
            <person name="Teucke M."/>
            <person name="Lanz C."/>
            <person name="Raddatz G."/>
            <person name="Osoegawa K."/>
            <person name="Zhu B."/>
            <person name="Rapp A."/>
            <person name="Widaa S."/>
            <person name="Langford C."/>
            <person name="Yang F."/>
            <person name="Schuster S.C."/>
            <person name="Carter N.P."/>
            <person name="Harrow J."/>
            <person name="Ning Z."/>
            <person name="Herrero J."/>
            <person name="Searle S.M."/>
            <person name="Enright A."/>
            <person name="Geisler R."/>
            <person name="Plasterk R.H."/>
            <person name="Lee C."/>
            <person name="Westerfield M."/>
            <person name="de Jong P.J."/>
            <person name="Zon L.I."/>
            <person name="Postlethwait J.H."/>
            <person name="Nusslein-Volhard C."/>
            <person name="Hubbard T.J."/>
            <person name="Roest Crollius H."/>
            <person name="Rogers J."/>
            <person name="Stemple D.L."/>
        </authorList>
    </citation>
    <scope>NUCLEOTIDE SEQUENCE [LARGE SCALE GENOMIC DNA]</scope>
    <source>
        <strain>Tuebingen</strain>
    </source>
</reference>
<accession>E7F888</accession>
<name>ARI5B_DANRE</name>
<organism>
    <name type="scientific">Danio rerio</name>
    <name type="common">Zebrafish</name>
    <name type="synonym">Brachydanio rerio</name>
    <dbReference type="NCBI Taxonomy" id="7955"/>
    <lineage>
        <taxon>Eukaryota</taxon>
        <taxon>Metazoa</taxon>
        <taxon>Chordata</taxon>
        <taxon>Craniata</taxon>
        <taxon>Vertebrata</taxon>
        <taxon>Euteleostomi</taxon>
        <taxon>Actinopterygii</taxon>
        <taxon>Neopterygii</taxon>
        <taxon>Teleostei</taxon>
        <taxon>Ostariophysi</taxon>
        <taxon>Cypriniformes</taxon>
        <taxon>Danionidae</taxon>
        <taxon>Danioninae</taxon>
        <taxon>Danio</taxon>
    </lineage>
</organism>
<sequence length="1044" mass="115806">MVSDLRSWKKGLQAVPLKPGVLKELGKNGQREALHKYRESTLNSGLNFKDVLKEKAELGEDADDKKVLVLSYPQYCRYRSIIARLRERPSSLLTDHVVLALGGIASLTNSTQILYCRDTFEHPTLVENESVCDEFAPNLKGRPRKKKLSISQRRDSQSGGARESNGVEGKTLVKMRADSKSGVSKPRNPSTGSCKRVQSENKPKGDGGDECRTDEQAFLVALYKYMKERKTPIERIPYLGFKQINLWTMFQAAQKLGGYEVITARRQWKNVYDELGGNPGSTSAATCTRRHYERLILPYERFTKGEEDKPLPPAKPRKQEGSVQESIIKAKMMPIKRPKDEQKTPRGDKDASAKVLELGMEDMEELQEKQNSQQLQAPTQTDRDPNSPLTEDDEGVLVIKDEDQPVLHNAYEHANGGLLPSLPQDGAQLKSEDCDAFPVAAVPLHHGHPLPNSHTSDQWKHGILEYKVPPSALANVEQSRPKEGQNQVVMVLPTLQQKPVTSPEIPPERVEPLKKEESCFNFNPLLYPRGNPGIMSPLAKKKMLSQVSGTGLLNNYPYGPPPPLVSRRLSSSGTEVSSAGQSSSQVSSSVETSIVIKRPSVIQHAQSFKSRGSEDRRSSTEGSQKDGCSEGEPVHHSQTLIREPYLKRVDPHSSMEKSAEMPRPGQAPSFLSEFYSSPHLHNLCRQTEHHLSKEQISKYLSRDVYTRDSETAQGFPPSQHPDNVGLNFSARLSQKEKGPPPERVTEEQPTDLSLPKSSPLKLPLSTSTLGGIPHAAIQQDIKNSPHFQAGNSQSSSVDYHPRACRVPPMTVSASKKVTESHSKVLEKTPNSRGEESMGFKIDEMSRPILSTKSSPQNICTARPLKRNIEDLENGPTEKKIRAVTPLHCSTQRDLPGKPRTPEADSESVKPAEPAVHINSYTSEGHKIPLHSHLFQGLYPGTFVSQVQDMCESLGSHVTPSYSHPLQYLKNQAVLSPLMPPFAIHSLMMQRQFLAANPAHMYRHQVGTSYGDILHPGLYPMSALHPQPAFSPPQLSSVHPSTKLS</sequence>